<feature type="chain" id="PRO_1000014405" description="Methenyltetrahydromethanopterin cyclohydrolase">
    <location>
        <begin position="1"/>
        <end position="323"/>
    </location>
</feature>
<keyword id="KW-0963">Cytoplasm</keyword>
<keyword id="KW-0378">Hydrolase</keyword>
<keyword id="KW-0484">Methanogenesis</keyword>
<keyword id="KW-0554">One-carbon metabolism</keyword>
<accession>A6UPJ2</accession>
<reference key="1">
    <citation type="submission" date="2007-06" db="EMBL/GenBank/DDBJ databases">
        <title>Complete sequence of Methanococcus vannielii SB.</title>
        <authorList>
            <consortium name="US DOE Joint Genome Institute"/>
            <person name="Copeland A."/>
            <person name="Lucas S."/>
            <person name="Lapidus A."/>
            <person name="Barry K."/>
            <person name="Glavina del Rio T."/>
            <person name="Dalin E."/>
            <person name="Tice H."/>
            <person name="Pitluck S."/>
            <person name="Chain P."/>
            <person name="Malfatti S."/>
            <person name="Shin M."/>
            <person name="Vergez L."/>
            <person name="Schmutz J."/>
            <person name="Larimer F."/>
            <person name="Land M."/>
            <person name="Hauser L."/>
            <person name="Kyrpides N."/>
            <person name="Anderson I."/>
            <person name="Sieprawska-Lupa M."/>
            <person name="Whitman W.B."/>
            <person name="Richardson P."/>
        </authorList>
    </citation>
    <scope>NUCLEOTIDE SEQUENCE [LARGE SCALE GENOMIC DNA]</scope>
    <source>
        <strain>ATCC 35089 / DSM 1224 / JCM 13029 / OCM 148 / SB</strain>
    </source>
</reference>
<comment type="function">
    <text evidence="1">Catalyzes the reversible interconversion of 5-formyl-H(4)MPT to methenyl-H(4)MPT(+).</text>
</comment>
<comment type="catalytic activity">
    <reaction evidence="1">
        <text>5,10-methenyl-5,6,7,8-tetrahydromethanopterin + H2O = N(5)-formyl-5,6,7,8-tetrahydromethanopterin + H(+)</text>
        <dbReference type="Rhea" id="RHEA:19053"/>
        <dbReference type="ChEBI" id="CHEBI:15377"/>
        <dbReference type="ChEBI" id="CHEBI:15378"/>
        <dbReference type="ChEBI" id="CHEBI:58018"/>
        <dbReference type="ChEBI" id="CHEBI:58337"/>
        <dbReference type="EC" id="3.5.4.27"/>
    </reaction>
</comment>
<comment type="pathway">
    <text evidence="1">One-carbon metabolism; methanogenesis from CO(2); 5,10-methenyl-5,6,7,8-tetrahydromethanopterin from CO(2): step 3/3.</text>
</comment>
<comment type="subcellular location">
    <subcellularLocation>
        <location evidence="1">Cytoplasm</location>
    </subcellularLocation>
</comment>
<comment type="similarity">
    <text evidence="1">Belongs to the MCH family.</text>
</comment>
<name>MCH_METVS</name>
<gene>
    <name evidence="1" type="primary">mch</name>
    <name type="ordered locus">Mevan_0507</name>
</gene>
<evidence type="ECO:0000255" key="1">
    <source>
        <dbReference type="HAMAP-Rule" id="MF_00486"/>
    </source>
</evidence>
<protein>
    <recommendedName>
        <fullName evidence="1">Methenyltetrahydromethanopterin cyclohydrolase</fullName>
        <ecNumber evidence="1">3.5.4.27</ecNumber>
    </recommendedName>
    <alternativeName>
        <fullName evidence="1">Methenyl-H4MPT cyclohydrolase</fullName>
    </alternativeName>
</protein>
<organism>
    <name type="scientific">Methanococcus vannielii (strain ATCC 35089 / DSM 1224 / JCM 13029 / OCM 148 / SB)</name>
    <dbReference type="NCBI Taxonomy" id="406327"/>
    <lineage>
        <taxon>Archaea</taxon>
        <taxon>Methanobacteriati</taxon>
        <taxon>Methanobacteriota</taxon>
        <taxon>Methanomada group</taxon>
        <taxon>Methanococci</taxon>
        <taxon>Methanococcales</taxon>
        <taxon>Methanococcaceae</taxon>
        <taxon>Methanococcus</taxon>
    </lineage>
</organism>
<sequence length="323" mass="34734">MVSVNLSSLPIVLDMINRNDDLNIQVIKLENGATVLDCGVNVTGSFEAGKLFTKICLGGLAHVGISISGTLDNKMVLPCVKVKTSHPAVATLGAQKAGWSVSVGKYFAMGSGPARALAMMPKVTYEEIEYRDDADVAILCLEASKLPDEKVADYVAQKCGVDVSKVYLLVAPTASIVGAVQISGRVVENGTYKMLEALHFDVRKVKLAAGIAPIAPIIGDDLKMMGATNDMVLYGGRTFYYIKSDEGDDIEALCKSLPSCSAQTYGKPFLEVFKEANYDFYKIDKGMFAPAVVTINDLRTGKLVTHGNTNIDVLKKSLKYTEI</sequence>
<proteinExistence type="inferred from homology"/>
<dbReference type="EC" id="3.5.4.27" evidence="1"/>
<dbReference type="EMBL" id="CP000742">
    <property type="protein sequence ID" value="ABR54414.1"/>
    <property type="molecule type" value="Genomic_DNA"/>
</dbReference>
<dbReference type="RefSeq" id="WP_011972317.1">
    <property type="nucleotide sequence ID" value="NC_009634.1"/>
</dbReference>
<dbReference type="SMR" id="A6UPJ2"/>
<dbReference type="STRING" id="406327.Mevan_0507"/>
<dbReference type="GeneID" id="5325664"/>
<dbReference type="KEGG" id="mvn:Mevan_0507"/>
<dbReference type="eggNOG" id="arCOG02675">
    <property type="taxonomic scope" value="Archaea"/>
</dbReference>
<dbReference type="HOGENOM" id="CLU_876031_0_0_2"/>
<dbReference type="OrthoDB" id="105468at2157"/>
<dbReference type="UniPathway" id="UPA00640">
    <property type="reaction ID" value="UER00694"/>
</dbReference>
<dbReference type="Proteomes" id="UP000001107">
    <property type="component" value="Chromosome"/>
</dbReference>
<dbReference type="GO" id="GO:0005737">
    <property type="term" value="C:cytoplasm"/>
    <property type="evidence" value="ECO:0007669"/>
    <property type="project" value="UniProtKB-SubCell"/>
</dbReference>
<dbReference type="GO" id="GO:0018759">
    <property type="term" value="F:methenyltetrahydromethanopterin cyclohydrolase activity"/>
    <property type="evidence" value="ECO:0007669"/>
    <property type="project" value="UniProtKB-UniRule"/>
</dbReference>
<dbReference type="GO" id="GO:0019386">
    <property type="term" value="P:methanogenesis, from carbon dioxide"/>
    <property type="evidence" value="ECO:0007669"/>
    <property type="project" value="UniProtKB-UniRule"/>
</dbReference>
<dbReference type="GO" id="GO:0006730">
    <property type="term" value="P:one-carbon metabolic process"/>
    <property type="evidence" value="ECO:0007669"/>
    <property type="project" value="UniProtKB-UniRule"/>
</dbReference>
<dbReference type="CDD" id="cd00545">
    <property type="entry name" value="MCH"/>
    <property type="match status" value="1"/>
</dbReference>
<dbReference type="Gene3D" id="3.10.340.11">
    <property type="entry name" value="Methenyltetrahydromethanopterin Cyclohydrolase, Chain A, domain 1"/>
    <property type="match status" value="1"/>
</dbReference>
<dbReference type="Gene3D" id="3.30.1030.10">
    <property type="entry name" value="Methenyltetrahydromethanopterin Cyclohydrolase, Chain A, domain 2"/>
    <property type="match status" value="1"/>
</dbReference>
<dbReference type="HAMAP" id="MF_00486">
    <property type="entry name" value="McH"/>
    <property type="match status" value="1"/>
</dbReference>
<dbReference type="InterPro" id="IPR003209">
    <property type="entry name" value="METHMP_CycHdrlase"/>
</dbReference>
<dbReference type="NCBIfam" id="TIGR03120">
    <property type="entry name" value="one_C_mch"/>
    <property type="match status" value="1"/>
</dbReference>
<dbReference type="Pfam" id="PF02289">
    <property type="entry name" value="MCH"/>
    <property type="match status" value="1"/>
</dbReference>
<dbReference type="SUPFAM" id="SSF56199">
    <property type="entry name" value="Methenyltetrahydromethanopterin cyclohydrolase"/>
    <property type="match status" value="1"/>
</dbReference>